<accession>P12179</accession>
<geneLocation type="chloroplast"/>
<gene>
    <name evidence="1" type="primary">petL</name>
</gene>
<reference key="1">
    <citation type="journal article" date="1988" name="J. Mol. Biol.">
        <title>Structure and organization of Marchantia polymorpha chloroplast genome. III. Gene organization of the large single copy region from rbcL to trnI(CAU).</title>
        <authorList>
            <person name="Fukuzawa H."/>
            <person name="Kohchi T."/>
            <person name="Sano T."/>
            <person name="Shirai H."/>
            <person name="Umesono K."/>
            <person name="Inokuchi H."/>
            <person name="Ozeki H."/>
            <person name="Ohyama K."/>
        </authorList>
    </citation>
    <scope>NUCLEOTIDE SEQUENCE [GENOMIC DNA]</scope>
</reference>
<reference key="2">
    <citation type="journal article" date="1986" name="Nature">
        <title>Chloroplast gene organization deduced from complete sequence of liverwort Marchantia polymorpha chloroplast DNA.</title>
        <authorList>
            <person name="Ohyama K."/>
            <person name="Fukuzawa H."/>
            <person name="Kohchi T."/>
            <person name="Shirai H."/>
            <person name="Sano T."/>
            <person name="Sano S."/>
            <person name="Umesono K."/>
            <person name="Shiki Y."/>
            <person name="Takeuchi M."/>
            <person name="Chang Z."/>
            <person name="Aota S."/>
            <person name="Inokuchi H."/>
            <person name="Ozeki H."/>
        </authorList>
    </citation>
    <scope>NUCLEOTIDE SEQUENCE [LARGE SCALE GENOMIC DNA]</scope>
</reference>
<organism>
    <name type="scientific">Marchantia polymorpha</name>
    <name type="common">Common liverwort</name>
    <name type="synonym">Marchantia aquatica</name>
    <dbReference type="NCBI Taxonomy" id="3197"/>
    <lineage>
        <taxon>Eukaryota</taxon>
        <taxon>Viridiplantae</taxon>
        <taxon>Streptophyta</taxon>
        <taxon>Embryophyta</taxon>
        <taxon>Marchantiophyta</taxon>
        <taxon>Marchantiopsida</taxon>
        <taxon>Marchantiidae</taxon>
        <taxon>Marchantiales</taxon>
        <taxon>Marchantiaceae</taxon>
        <taxon>Marchantia</taxon>
    </lineage>
</organism>
<evidence type="ECO:0000255" key="1">
    <source>
        <dbReference type="HAMAP-Rule" id="MF_00433"/>
    </source>
</evidence>
<comment type="function">
    <text evidence="1">Component of the cytochrome b6-f complex, which mediates electron transfer between photosystem II (PSII) and photosystem I (PSI), cyclic electron flow around PSI, and state transitions. PetL is important for photoautotrophic growth as well as for electron transfer efficiency and stability of the cytochrome b6-f complex.</text>
</comment>
<comment type="subunit">
    <text evidence="1">The 4 large subunits of the cytochrome b6-f complex are cytochrome b6, subunit IV (17 kDa polypeptide, PetD), cytochrome f and the Rieske protein, while the 4 small subunits are PetG, PetL, PetM and PetN. The complex functions as a dimer.</text>
</comment>
<comment type="subcellular location">
    <subcellularLocation>
        <location evidence="1">Plastid</location>
        <location evidence="1">Chloroplast thylakoid membrane</location>
        <topology evidence="1">Single-pass membrane protein</topology>
    </subcellularLocation>
</comment>
<comment type="similarity">
    <text evidence="1">Belongs to the PetL family.</text>
</comment>
<protein>
    <recommendedName>
        <fullName evidence="1">Cytochrome b6-f complex subunit 6</fullName>
    </recommendedName>
    <alternativeName>
        <fullName evidence="1">Cytochrome b6-f complex subunit PetL</fullName>
    </alternativeName>
    <alternativeName>
        <fullName evidence="1">Cytochrome b6-f complex subunit VI</fullName>
    </alternativeName>
</protein>
<name>PETL_MARPO</name>
<dbReference type="EMBL" id="X04465">
    <property type="protein sequence ID" value="CAA28103.1"/>
    <property type="molecule type" value="Genomic_DNA"/>
</dbReference>
<dbReference type="PIR" id="S01540">
    <property type="entry name" value="A05051"/>
</dbReference>
<dbReference type="RefSeq" id="NP_039317.1">
    <property type="nucleotide sequence ID" value="NC_001319.1"/>
</dbReference>
<dbReference type="RefSeq" id="YP_009646831.1">
    <property type="nucleotide sequence ID" value="NC_042505.1"/>
</dbReference>
<dbReference type="SMR" id="P12179"/>
<dbReference type="GeneID" id="40386731"/>
<dbReference type="GO" id="GO:0009535">
    <property type="term" value="C:chloroplast thylakoid membrane"/>
    <property type="evidence" value="ECO:0007669"/>
    <property type="project" value="UniProtKB-SubCell"/>
</dbReference>
<dbReference type="GO" id="GO:0009512">
    <property type="term" value="C:cytochrome b6f complex"/>
    <property type="evidence" value="ECO:0007669"/>
    <property type="project" value="InterPro"/>
</dbReference>
<dbReference type="GO" id="GO:0045158">
    <property type="term" value="F:electron transporter, transferring electrons within cytochrome b6/f complex of photosystem II activity"/>
    <property type="evidence" value="ECO:0007669"/>
    <property type="project" value="UniProtKB-UniRule"/>
</dbReference>
<dbReference type="GO" id="GO:0015979">
    <property type="term" value="P:photosynthesis"/>
    <property type="evidence" value="ECO:0007669"/>
    <property type="project" value="UniProtKB-KW"/>
</dbReference>
<dbReference type="HAMAP" id="MF_00433">
    <property type="entry name" value="Cytb6_f_PetL"/>
    <property type="match status" value="1"/>
</dbReference>
<dbReference type="InterPro" id="IPR007802">
    <property type="entry name" value="Cyt_b6/f_cplx_su6"/>
</dbReference>
<dbReference type="PANTHER" id="PTHR37266">
    <property type="entry name" value="CYTOCHROME B6-F COMPLEX SUBUNIT 6"/>
    <property type="match status" value="1"/>
</dbReference>
<dbReference type="PANTHER" id="PTHR37266:SF1">
    <property type="entry name" value="CYTOCHROME B6-F COMPLEX SUBUNIT 6"/>
    <property type="match status" value="1"/>
</dbReference>
<dbReference type="Pfam" id="PF05115">
    <property type="entry name" value="PetL"/>
    <property type="match status" value="1"/>
</dbReference>
<feature type="chain" id="PRO_0000220457" description="Cytochrome b6-f complex subunit 6">
    <location>
        <begin position="1"/>
        <end position="31"/>
    </location>
</feature>
<feature type="transmembrane region" description="Helical" evidence="1">
    <location>
        <begin position="4"/>
        <end position="24"/>
    </location>
</feature>
<proteinExistence type="inferred from homology"/>
<sequence length="31" mass="3466">MLTIISYFLFLIGALTLALVLFIGLNKIQLI</sequence>
<keyword id="KW-0150">Chloroplast</keyword>
<keyword id="KW-0249">Electron transport</keyword>
<keyword id="KW-0472">Membrane</keyword>
<keyword id="KW-0602">Photosynthesis</keyword>
<keyword id="KW-0934">Plastid</keyword>
<keyword id="KW-0793">Thylakoid</keyword>
<keyword id="KW-0812">Transmembrane</keyword>
<keyword id="KW-1133">Transmembrane helix</keyword>
<keyword id="KW-0813">Transport</keyword>